<dbReference type="EMBL" id="LT708304">
    <property type="protein sequence ID" value="SIU00730.1"/>
    <property type="molecule type" value="Genomic_DNA"/>
</dbReference>
<dbReference type="RefSeq" id="NP_855772.1">
    <property type="nucleotide sequence ID" value="NC_002945.3"/>
</dbReference>
<dbReference type="RefSeq" id="WP_003410775.1">
    <property type="nucleotide sequence ID" value="NC_002945.4"/>
</dbReference>
<dbReference type="SMR" id="P64942"/>
<dbReference type="KEGG" id="mbo:BQ2027_MB2123C"/>
<dbReference type="PATRIC" id="fig|233413.5.peg.2334"/>
<dbReference type="Proteomes" id="UP000001419">
    <property type="component" value="Chromosome"/>
</dbReference>
<dbReference type="InterPro" id="IPR051534">
    <property type="entry name" value="CBASS_pafABC_assoc_protein"/>
</dbReference>
<dbReference type="InterPro" id="IPR026881">
    <property type="entry name" value="WYL_dom"/>
</dbReference>
<dbReference type="PANTHER" id="PTHR34580">
    <property type="match status" value="1"/>
</dbReference>
<dbReference type="PANTHER" id="PTHR34580:SF3">
    <property type="entry name" value="PROTEIN PAFB"/>
    <property type="match status" value="1"/>
</dbReference>
<dbReference type="Pfam" id="PF13280">
    <property type="entry name" value="WYL"/>
    <property type="match status" value="1"/>
</dbReference>
<dbReference type="PROSITE" id="PS52050">
    <property type="entry name" value="WYL"/>
    <property type="match status" value="1"/>
</dbReference>
<protein>
    <recommendedName>
        <fullName>Protein PafB</fullName>
    </recommendedName>
</protein>
<name>PAFB_MYCBO</name>
<sequence length="332" mass="35300">MATSKVERLVNLVIALLSTRGYITAEKIRSSVAGYSDSPSVEAFSRMFERDKNELRDLGIPLEVGRVSALEPTEGYRINRDAYALSPVELTPDEAAAVAVATQLWESPELITATQGALLKLRAAGVDVDPLDTGAPVAIASAAAVSGLRGSEDVLGILLSAIDSGQVVQFSHRSSRAEPYTVRTVEPWGVVTEKGRWYLVGHDRDRDATRVFRLSRIGAQVTPIGPAGATTVPAGVDLRSIVAQKVTEVPTGEQATVWVAEGRATALRRAGRSAGPRQLGGRDGEVIELEIRSSDRLAREITGYGADAIVLQPGSLRDDVLARLRAQAGALA</sequence>
<comment type="function">
    <text evidence="1">Does not seem to be involved in pupylation or substrate degradation.</text>
</comment>
<comment type="subunit">
    <text evidence="1">Interacts with PafC; with which it probably forms a heterocomplex.</text>
</comment>
<comment type="similarity">
    <text evidence="3">Belongs to the PafB family.</text>
</comment>
<accession>P64942</accession>
<accession>A0A1R3Y087</accession>
<accession>Q10705</accession>
<accession>X2BK22</accession>
<proteinExistence type="inferred from homology"/>
<feature type="chain" id="PRO_0000103964" description="Protein PafB">
    <location>
        <begin position="1"/>
        <end position="332"/>
    </location>
</feature>
<feature type="domain" description="WYL" evidence="2">
    <location>
        <begin position="147"/>
        <end position="227"/>
    </location>
</feature>
<reference key="1">
    <citation type="journal article" date="2003" name="Proc. Natl. Acad. Sci. U.S.A.">
        <title>The complete genome sequence of Mycobacterium bovis.</title>
        <authorList>
            <person name="Garnier T."/>
            <person name="Eiglmeier K."/>
            <person name="Camus J.-C."/>
            <person name="Medina N."/>
            <person name="Mansoor H."/>
            <person name="Pryor M."/>
            <person name="Duthoy S."/>
            <person name="Grondin S."/>
            <person name="Lacroix C."/>
            <person name="Monsempe C."/>
            <person name="Simon S."/>
            <person name="Harris B."/>
            <person name="Atkin R."/>
            <person name="Doggett J."/>
            <person name="Mayes R."/>
            <person name="Keating L."/>
            <person name="Wheeler P.R."/>
            <person name="Parkhill J."/>
            <person name="Barrell B.G."/>
            <person name="Cole S.T."/>
            <person name="Gordon S.V."/>
            <person name="Hewinson R.G."/>
        </authorList>
    </citation>
    <scope>NUCLEOTIDE SEQUENCE [LARGE SCALE GENOMIC DNA]</scope>
    <source>
        <strain>ATCC BAA-935 / AF2122/97</strain>
    </source>
</reference>
<reference key="2">
    <citation type="journal article" date="2017" name="Genome Announc.">
        <title>Updated reference genome sequence and annotation of Mycobacterium bovis AF2122/97.</title>
        <authorList>
            <person name="Malone K.M."/>
            <person name="Farrell D."/>
            <person name="Stuber T.P."/>
            <person name="Schubert O.T."/>
            <person name="Aebersold R."/>
            <person name="Robbe-Austerman S."/>
            <person name="Gordon S.V."/>
        </authorList>
    </citation>
    <scope>NUCLEOTIDE SEQUENCE [LARGE SCALE GENOMIC DNA]</scope>
    <scope>GENOME REANNOTATION</scope>
    <source>
        <strain>ATCC BAA-935 / AF2122/97</strain>
    </source>
</reference>
<evidence type="ECO:0000250" key="1"/>
<evidence type="ECO:0000255" key="2">
    <source>
        <dbReference type="PROSITE-ProRule" id="PRU01395"/>
    </source>
</evidence>
<evidence type="ECO:0000305" key="3"/>
<organism>
    <name type="scientific">Mycobacterium bovis (strain ATCC BAA-935 / AF2122/97)</name>
    <dbReference type="NCBI Taxonomy" id="233413"/>
    <lineage>
        <taxon>Bacteria</taxon>
        <taxon>Bacillati</taxon>
        <taxon>Actinomycetota</taxon>
        <taxon>Actinomycetes</taxon>
        <taxon>Mycobacteriales</taxon>
        <taxon>Mycobacteriaceae</taxon>
        <taxon>Mycobacterium</taxon>
        <taxon>Mycobacterium tuberculosis complex</taxon>
    </lineage>
</organism>
<keyword id="KW-1185">Reference proteome</keyword>
<gene>
    <name type="primary">pafB</name>
    <name type="ordered locus">BQ2027_MB2123C</name>
</gene>